<comment type="function">
    <text evidence="1">This is one of the proteins that bind and probably mediate the attachment of the 5S RNA into the large ribosomal subunit, where it forms part of the central protuberance.</text>
</comment>
<comment type="subunit">
    <text evidence="1">Part of the 50S ribosomal subunit; part of the 5S rRNA/L5/L18/L25 subcomplex. Contacts the 5S and 23S rRNAs.</text>
</comment>
<comment type="similarity">
    <text evidence="1">Belongs to the universal ribosomal protein uL18 family.</text>
</comment>
<evidence type="ECO:0000255" key="1">
    <source>
        <dbReference type="HAMAP-Rule" id="MF_01337"/>
    </source>
</evidence>
<evidence type="ECO:0000256" key="2">
    <source>
        <dbReference type="SAM" id="MobiDB-lite"/>
    </source>
</evidence>
<evidence type="ECO:0000305" key="3"/>
<reference key="1">
    <citation type="journal article" date="2004" name="Nucleic Acids Res.">
        <title>Whole genome comparisons of serotype 4b and 1/2a strains of the food-borne pathogen Listeria monocytogenes reveal new insights into the core genome components of this species.</title>
        <authorList>
            <person name="Nelson K.E."/>
            <person name="Fouts D.E."/>
            <person name="Mongodin E.F."/>
            <person name="Ravel J."/>
            <person name="DeBoy R.T."/>
            <person name="Kolonay J.F."/>
            <person name="Rasko D.A."/>
            <person name="Angiuoli S.V."/>
            <person name="Gill S.R."/>
            <person name="Paulsen I.T."/>
            <person name="Peterson J.D."/>
            <person name="White O."/>
            <person name="Nelson W.C."/>
            <person name="Nierman W.C."/>
            <person name="Beanan M.J."/>
            <person name="Brinkac L.M."/>
            <person name="Daugherty S.C."/>
            <person name="Dodson R.J."/>
            <person name="Durkin A.S."/>
            <person name="Madupu R."/>
            <person name="Haft D.H."/>
            <person name="Selengut J."/>
            <person name="Van Aken S.E."/>
            <person name="Khouri H.M."/>
            <person name="Fedorova N."/>
            <person name="Forberger H.A."/>
            <person name="Tran B."/>
            <person name="Kathariou S."/>
            <person name="Wonderling L.D."/>
            <person name="Uhlich G.A."/>
            <person name="Bayles D.O."/>
            <person name="Luchansky J.B."/>
            <person name="Fraser C.M."/>
        </authorList>
    </citation>
    <scope>NUCLEOTIDE SEQUENCE [LARGE SCALE GENOMIC DNA]</scope>
    <source>
        <strain>F2365</strain>
    </source>
</reference>
<accession>Q71WG2</accession>
<proteinExistence type="inferred from homology"/>
<name>RL18_LISMF</name>
<feature type="chain" id="PRO_0000131288" description="Large ribosomal subunit protein uL18">
    <location>
        <begin position="1"/>
        <end position="119"/>
    </location>
</feature>
<feature type="region of interest" description="Disordered" evidence="2">
    <location>
        <begin position="1"/>
        <end position="25"/>
    </location>
</feature>
<feature type="compositionally biased region" description="Basic residues" evidence="2">
    <location>
        <begin position="9"/>
        <end position="20"/>
    </location>
</feature>
<sequence length="119" mass="13096">MITKIDKNKVRKKRHARVRSKISGTESRPRLNVFRSNKNIYAQIIDDVNGVTLASASNLDKDFGSAESKVDAASKVGELVAKRASEKGITSVTFDRGGYLYHGRVKALAEAARENGLEF</sequence>
<gene>
    <name evidence="1" type="primary">rplR</name>
    <name type="ordered locus">LMOf2365_2589</name>
</gene>
<protein>
    <recommendedName>
        <fullName evidence="1">Large ribosomal subunit protein uL18</fullName>
    </recommendedName>
    <alternativeName>
        <fullName evidence="3">50S ribosomal protein L18</fullName>
    </alternativeName>
</protein>
<keyword id="KW-0687">Ribonucleoprotein</keyword>
<keyword id="KW-0689">Ribosomal protein</keyword>
<keyword id="KW-0694">RNA-binding</keyword>
<keyword id="KW-0699">rRNA-binding</keyword>
<organism>
    <name type="scientific">Listeria monocytogenes serotype 4b (strain F2365)</name>
    <dbReference type="NCBI Taxonomy" id="265669"/>
    <lineage>
        <taxon>Bacteria</taxon>
        <taxon>Bacillati</taxon>
        <taxon>Bacillota</taxon>
        <taxon>Bacilli</taxon>
        <taxon>Bacillales</taxon>
        <taxon>Listeriaceae</taxon>
        <taxon>Listeria</taxon>
    </lineage>
</organism>
<dbReference type="EMBL" id="AE017262">
    <property type="protein sequence ID" value="AAT05354.1"/>
    <property type="molecule type" value="Genomic_DNA"/>
</dbReference>
<dbReference type="RefSeq" id="WP_003739848.1">
    <property type="nucleotide sequence ID" value="NC_002973.6"/>
</dbReference>
<dbReference type="SMR" id="Q71WG2"/>
<dbReference type="GeneID" id="93240497"/>
<dbReference type="KEGG" id="lmf:LMOf2365_2589"/>
<dbReference type="HOGENOM" id="CLU_098841_0_1_9"/>
<dbReference type="GO" id="GO:0022625">
    <property type="term" value="C:cytosolic large ribosomal subunit"/>
    <property type="evidence" value="ECO:0007669"/>
    <property type="project" value="TreeGrafter"/>
</dbReference>
<dbReference type="GO" id="GO:0008097">
    <property type="term" value="F:5S rRNA binding"/>
    <property type="evidence" value="ECO:0007669"/>
    <property type="project" value="TreeGrafter"/>
</dbReference>
<dbReference type="GO" id="GO:0003735">
    <property type="term" value="F:structural constituent of ribosome"/>
    <property type="evidence" value="ECO:0007669"/>
    <property type="project" value="InterPro"/>
</dbReference>
<dbReference type="GO" id="GO:0006412">
    <property type="term" value="P:translation"/>
    <property type="evidence" value="ECO:0007669"/>
    <property type="project" value="UniProtKB-UniRule"/>
</dbReference>
<dbReference type="CDD" id="cd00432">
    <property type="entry name" value="Ribosomal_L18_L5e"/>
    <property type="match status" value="1"/>
</dbReference>
<dbReference type="FunFam" id="3.30.420.100:FF:000001">
    <property type="entry name" value="50S ribosomal protein L18"/>
    <property type="match status" value="1"/>
</dbReference>
<dbReference type="Gene3D" id="3.30.420.100">
    <property type="match status" value="1"/>
</dbReference>
<dbReference type="HAMAP" id="MF_01337_B">
    <property type="entry name" value="Ribosomal_uL18_B"/>
    <property type="match status" value="1"/>
</dbReference>
<dbReference type="InterPro" id="IPR004389">
    <property type="entry name" value="Ribosomal_uL18_bac-type"/>
</dbReference>
<dbReference type="InterPro" id="IPR005484">
    <property type="entry name" value="Ribosomal_uL18_bac/euk"/>
</dbReference>
<dbReference type="NCBIfam" id="TIGR00060">
    <property type="entry name" value="L18_bact"/>
    <property type="match status" value="1"/>
</dbReference>
<dbReference type="PANTHER" id="PTHR12899">
    <property type="entry name" value="39S RIBOSOMAL PROTEIN L18, MITOCHONDRIAL"/>
    <property type="match status" value="1"/>
</dbReference>
<dbReference type="PANTHER" id="PTHR12899:SF3">
    <property type="entry name" value="LARGE RIBOSOMAL SUBUNIT PROTEIN UL18M"/>
    <property type="match status" value="1"/>
</dbReference>
<dbReference type="Pfam" id="PF00861">
    <property type="entry name" value="Ribosomal_L18p"/>
    <property type="match status" value="1"/>
</dbReference>
<dbReference type="SUPFAM" id="SSF53137">
    <property type="entry name" value="Translational machinery components"/>
    <property type="match status" value="1"/>
</dbReference>